<protein>
    <recommendedName>
        <fullName>Nuclease SbcCD subunit C</fullName>
    </recommendedName>
</protein>
<feature type="chain" id="PRO_0000338475" description="Nuclease SbcCD subunit C">
    <location>
        <begin position="1"/>
        <end position="1009"/>
    </location>
</feature>
<feature type="coiled-coil region" evidence="2">
    <location>
        <begin position="397"/>
        <end position="499"/>
    </location>
</feature>
<feature type="binding site" evidence="2">
    <location>
        <begin position="34"/>
        <end position="41"/>
    </location>
    <ligand>
        <name>ATP</name>
        <dbReference type="ChEBI" id="CHEBI:30616"/>
    </ligand>
</feature>
<name>SBCC_STAEQ</name>
<comment type="function">
    <text evidence="1">SbcCD cleaves DNA hairpin structures. These structures can inhibit DNA replication and are intermediates in certain DNA recombination reactions. The complex acts as a 3'-&gt;5' double strand exonuclease that can open hairpins. It also has a 5' single-strand endonuclease activity (By similarity).</text>
</comment>
<comment type="subunit">
    <text evidence="1">Heterodimer of SbcC and SbcD.</text>
</comment>
<comment type="similarity">
    <text evidence="3">Belongs to the SMC family. SbcC subfamily.</text>
</comment>
<dbReference type="EMBL" id="CP000029">
    <property type="protein sequence ID" value="AAW54293.1"/>
    <property type="molecule type" value="Genomic_DNA"/>
</dbReference>
<dbReference type="RefSeq" id="WP_002456208.1">
    <property type="nucleotide sequence ID" value="NC_002976.3"/>
</dbReference>
<dbReference type="SMR" id="Q5HPJ3"/>
<dbReference type="STRING" id="176279.SERP0918"/>
<dbReference type="GeneID" id="50018844"/>
<dbReference type="KEGG" id="ser:SERP0918"/>
<dbReference type="eggNOG" id="COG0419">
    <property type="taxonomic scope" value="Bacteria"/>
</dbReference>
<dbReference type="HOGENOM" id="CLU_004785_2_1_9"/>
<dbReference type="Proteomes" id="UP000000531">
    <property type="component" value="Chromosome"/>
</dbReference>
<dbReference type="GO" id="GO:0005524">
    <property type="term" value="F:ATP binding"/>
    <property type="evidence" value="ECO:0007669"/>
    <property type="project" value="UniProtKB-KW"/>
</dbReference>
<dbReference type="GO" id="GO:0016887">
    <property type="term" value="F:ATP hydrolysis activity"/>
    <property type="evidence" value="ECO:0007669"/>
    <property type="project" value="InterPro"/>
</dbReference>
<dbReference type="GO" id="GO:0004519">
    <property type="term" value="F:endonuclease activity"/>
    <property type="evidence" value="ECO:0007669"/>
    <property type="project" value="UniProtKB-KW"/>
</dbReference>
<dbReference type="GO" id="GO:0004527">
    <property type="term" value="F:exonuclease activity"/>
    <property type="evidence" value="ECO:0007669"/>
    <property type="project" value="UniProtKB-KW"/>
</dbReference>
<dbReference type="GO" id="GO:0006310">
    <property type="term" value="P:DNA recombination"/>
    <property type="evidence" value="ECO:0007669"/>
    <property type="project" value="UniProtKB-KW"/>
</dbReference>
<dbReference type="GO" id="GO:0006260">
    <property type="term" value="P:DNA replication"/>
    <property type="evidence" value="ECO:0007669"/>
    <property type="project" value="UniProtKB-KW"/>
</dbReference>
<dbReference type="GO" id="GO:0006302">
    <property type="term" value="P:double-strand break repair"/>
    <property type="evidence" value="ECO:0007669"/>
    <property type="project" value="InterPro"/>
</dbReference>
<dbReference type="Gene3D" id="3.40.50.300">
    <property type="entry name" value="P-loop containing nucleotide triphosphate hydrolases"/>
    <property type="match status" value="2"/>
</dbReference>
<dbReference type="InterPro" id="IPR027417">
    <property type="entry name" value="P-loop_NTPase"/>
</dbReference>
<dbReference type="InterPro" id="IPR038729">
    <property type="entry name" value="Rad50/SbcC_AAA"/>
</dbReference>
<dbReference type="InterPro" id="IPR053380">
    <property type="entry name" value="SbcCD_Nuclease_C"/>
</dbReference>
<dbReference type="NCBIfam" id="NF041751">
    <property type="entry name" value="sbcc_Staph"/>
    <property type="match status" value="1"/>
</dbReference>
<dbReference type="PANTHER" id="PTHR32114">
    <property type="entry name" value="ABC TRANSPORTER ABCH.3"/>
    <property type="match status" value="1"/>
</dbReference>
<dbReference type="PANTHER" id="PTHR32114:SF2">
    <property type="entry name" value="ABC TRANSPORTER ABCH.3"/>
    <property type="match status" value="1"/>
</dbReference>
<dbReference type="Pfam" id="PF13476">
    <property type="entry name" value="AAA_23"/>
    <property type="match status" value="1"/>
</dbReference>
<dbReference type="Pfam" id="PF13558">
    <property type="entry name" value="SbcC_Walker_B"/>
    <property type="match status" value="1"/>
</dbReference>
<dbReference type="SUPFAM" id="SSF52540">
    <property type="entry name" value="P-loop containing nucleoside triphosphate hydrolases"/>
    <property type="match status" value="1"/>
</dbReference>
<dbReference type="SUPFAM" id="SSF75712">
    <property type="entry name" value="Rad50 coiled-coil Zn hook"/>
    <property type="match status" value="1"/>
</dbReference>
<organism>
    <name type="scientific">Staphylococcus epidermidis (strain ATCC 35984 / DSM 28319 / BCRC 17069 / CCUG 31568 / BM 3577 / RP62A)</name>
    <dbReference type="NCBI Taxonomy" id="176279"/>
    <lineage>
        <taxon>Bacteria</taxon>
        <taxon>Bacillati</taxon>
        <taxon>Bacillota</taxon>
        <taxon>Bacilli</taxon>
        <taxon>Bacillales</taxon>
        <taxon>Staphylococcaceae</taxon>
        <taxon>Staphylococcus</taxon>
    </lineage>
</organism>
<sequence length="1009" mass="118668">MKPLHIVMENFGPFIKETIDFEQVETDQLFLISGKTGSGKTMIFDAIVYALYGMASTKTRKEGDLRSHFADGKSPMSVIYQFKVNNQTFKIHREAPFIKEGNITKTQAKLNIYELVDNQFELRESKVNQGNQFIVQLLGVNAEQFRQLFILPQGEFKKFLQSNSKDKQSILRTLFNSERFDEIRHLLVENVKQEKVQIENRYTQIENLWNDIDTFNNDELALYKELESSQTDKMIEKFPQFNDYGCKILKSFEEAKNKITKELDDLNHKYKVNVELSENTKKLKAEKIKFDDLKKEQNYIDKLKQELKMIQESKVLITYFTRLQSLKKDKDELVSLHEQSKLNETNYHNEIKGFQKQLEHLSTRENEITQFNQYLEKNQVFFNQLDKIISSYQQKPVIEEEIKRLYSEYNDLITKKEELTKEMNNKNKDFAIIEHYTEEIYKLKKIIDESERQKKDEKLFDKLQLDKSSYLSKLKEKKEQLNEIESSITNIDATLIDLNDKKDFVNEIKSAMSIGDTCPICGNEIHSLGEHIDFESIAQKNNKIKRLESKKVKIRDEIIKIETRIEELNHRENELNFEKQEKKDISELQKQLNHLNQLKDEQQSINKLVENFEKQEKEIVNKIHQFDLDLSRKNTQKEKLEIQINDFERHSQFSSVNDFETYYSHAKKQVETYEYENEKTKDKLNELNNKLKIEMNDQKHLTENLTQTSKEINNLELKMEKEMQQLGFESYDQVKSAADLSAQKDEIEREINIYNKNYQSYEIEINRLKELVKGKKLLNLEELRQSIEKTNLKLDETNSQIATISYKIDNNSNKFNKIKNIIQILDDELKVQKEIFLLSEILAGKNDYKLTLENYVLIYYLEKIIFQANQRLSFMSGNRYQLIRREAISLGLSGLEIDVFDFHSNKSRHISSLSGGETFQASLALALGLSEVVQQESGGITLDSMFIDEGFGTLDQETLETAIDTLINLKSSGRMVGIISHVSELKQRIPLILEVTSNQYESHTQFRKN</sequence>
<gene>
    <name type="primary">sbcC</name>
    <name type="ordered locus">SERP0918</name>
</gene>
<accession>Q5HPJ3</accession>
<reference key="1">
    <citation type="journal article" date="2005" name="J. Bacteriol.">
        <title>Insights on evolution of virulence and resistance from the complete genome analysis of an early methicillin-resistant Staphylococcus aureus strain and a biofilm-producing methicillin-resistant Staphylococcus epidermidis strain.</title>
        <authorList>
            <person name="Gill S.R."/>
            <person name="Fouts D.E."/>
            <person name="Archer G.L."/>
            <person name="Mongodin E.F."/>
            <person name="DeBoy R.T."/>
            <person name="Ravel J."/>
            <person name="Paulsen I.T."/>
            <person name="Kolonay J.F."/>
            <person name="Brinkac L.M."/>
            <person name="Beanan M.J."/>
            <person name="Dodson R.J."/>
            <person name="Daugherty S.C."/>
            <person name="Madupu R."/>
            <person name="Angiuoli S.V."/>
            <person name="Durkin A.S."/>
            <person name="Haft D.H."/>
            <person name="Vamathevan J.J."/>
            <person name="Khouri H."/>
            <person name="Utterback T.R."/>
            <person name="Lee C."/>
            <person name="Dimitrov G."/>
            <person name="Jiang L."/>
            <person name="Qin H."/>
            <person name="Weidman J."/>
            <person name="Tran K."/>
            <person name="Kang K.H."/>
            <person name="Hance I.R."/>
            <person name="Nelson K.E."/>
            <person name="Fraser C.M."/>
        </authorList>
    </citation>
    <scope>NUCLEOTIDE SEQUENCE [LARGE SCALE GENOMIC DNA]</scope>
    <source>
        <strain>ATCC 35984 / DSM 28319 / BCRC 17069 / CCUG 31568 / BM 3577 / RP62A</strain>
    </source>
</reference>
<keyword id="KW-0067">ATP-binding</keyword>
<keyword id="KW-0175">Coiled coil</keyword>
<keyword id="KW-0233">DNA recombination</keyword>
<keyword id="KW-0235">DNA replication</keyword>
<keyword id="KW-0255">Endonuclease</keyword>
<keyword id="KW-0269">Exonuclease</keyword>
<keyword id="KW-0378">Hydrolase</keyword>
<keyword id="KW-0540">Nuclease</keyword>
<keyword id="KW-0547">Nucleotide-binding</keyword>
<keyword id="KW-1185">Reference proteome</keyword>
<evidence type="ECO:0000250" key="1"/>
<evidence type="ECO:0000255" key="2"/>
<evidence type="ECO:0000305" key="3"/>
<proteinExistence type="inferred from homology"/>